<gene>
    <name type="primary">pepA</name>
    <name type="ordered locus">APE_2450.1</name>
</gene>
<evidence type="ECO:0000250" key="1"/>
<evidence type="ECO:0000255" key="2"/>
<evidence type="ECO:0000305" key="3"/>
<reference key="1">
    <citation type="journal article" date="1999" name="DNA Res.">
        <title>Complete genome sequence of an aerobic hyper-thermophilic crenarchaeon, Aeropyrum pernix K1.</title>
        <authorList>
            <person name="Kawarabayasi Y."/>
            <person name="Hino Y."/>
            <person name="Horikawa H."/>
            <person name="Yamazaki S."/>
            <person name="Haikawa Y."/>
            <person name="Jin-no K."/>
            <person name="Takahashi M."/>
            <person name="Sekine M."/>
            <person name="Baba S."/>
            <person name="Ankai A."/>
            <person name="Kosugi H."/>
            <person name="Hosoyama A."/>
            <person name="Fukui S."/>
            <person name="Nagai Y."/>
            <person name="Nishijima K."/>
            <person name="Nakazawa H."/>
            <person name="Takamiya M."/>
            <person name="Masuda S."/>
            <person name="Funahashi T."/>
            <person name="Tanaka T."/>
            <person name="Kudoh Y."/>
            <person name="Yamazaki J."/>
            <person name="Kushida N."/>
            <person name="Oguchi A."/>
            <person name="Aoki K."/>
            <person name="Kubota K."/>
            <person name="Nakamura Y."/>
            <person name="Nomura N."/>
            <person name="Sako Y."/>
            <person name="Kikuchi H."/>
        </authorList>
    </citation>
    <scope>NUCLEOTIDE SEQUENCE [LARGE SCALE GENOMIC DNA]</scope>
    <source>
        <strain>ATCC 700893 / DSM 11879 / JCM 9820 / NBRC 100138 / K1</strain>
    </source>
</reference>
<dbReference type="EC" id="3.4.11.1"/>
<dbReference type="EC" id="3.4.11.10"/>
<dbReference type="EMBL" id="BA000002">
    <property type="protein sequence ID" value="BAA81465.2"/>
    <property type="molecule type" value="Genomic_DNA"/>
</dbReference>
<dbReference type="PIR" id="A72476">
    <property type="entry name" value="A72476"/>
</dbReference>
<dbReference type="RefSeq" id="WP_010867014.1">
    <property type="nucleotide sequence ID" value="NC_000854.2"/>
</dbReference>
<dbReference type="SMR" id="Q9Y935"/>
<dbReference type="STRING" id="272557.APE_2450.1"/>
<dbReference type="EnsemblBacteria" id="BAA81465">
    <property type="protein sequence ID" value="BAA81465"/>
    <property type="gene ID" value="APE_2450.1"/>
</dbReference>
<dbReference type="GeneID" id="1445428"/>
<dbReference type="KEGG" id="ape:APE_2450.1"/>
<dbReference type="PATRIC" id="fig|272557.25.peg.1627"/>
<dbReference type="eggNOG" id="arCOG04322">
    <property type="taxonomic scope" value="Archaea"/>
</dbReference>
<dbReference type="Proteomes" id="UP000002518">
    <property type="component" value="Chromosome"/>
</dbReference>
<dbReference type="GO" id="GO:0005737">
    <property type="term" value="C:cytoplasm"/>
    <property type="evidence" value="ECO:0007669"/>
    <property type="project" value="UniProtKB-SubCell"/>
</dbReference>
<dbReference type="GO" id="GO:0030145">
    <property type="term" value="F:manganese ion binding"/>
    <property type="evidence" value="ECO:0007669"/>
    <property type="project" value="UniProtKB-UniRule"/>
</dbReference>
<dbReference type="GO" id="GO:0070006">
    <property type="term" value="F:metalloaminopeptidase activity"/>
    <property type="evidence" value="ECO:0007669"/>
    <property type="project" value="InterPro"/>
</dbReference>
<dbReference type="GO" id="GO:0006508">
    <property type="term" value="P:proteolysis"/>
    <property type="evidence" value="ECO:0007669"/>
    <property type="project" value="UniProtKB-KW"/>
</dbReference>
<dbReference type="CDD" id="cd00433">
    <property type="entry name" value="Peptidase_M17"/>
    <property type="match status" value="1"/>
</dbReference>
<dbReference type="Gene3D" id="3.40.220.10">
    <property type="entry name" value="Leucine Aminopeptidase, subunit E, domain 1"/>
    <property type="match status" value="1"/>
</dbReference>
<dbReference type="Gene3D" id="3.40.630.10">
    <property type="entry name" value="Zn peptidases"/>
    <property type="match status" value="1"/>
</dbReference>
<dbReference type="HAMAP" id="MF_00181">
    <property type="entry name" value="Cytosol_peptidase_M17"/>
    <property type="match status" value="1"/>
</dbReference>
<dbReference type="InterPro" id="IPR011356">
    <property type="entry name" value="Leucine_aapep/pepB"/>
</dbReference>
<dbReference type="InterPro" id="IPR043472">
    <property type="entry name" value="Macro_dom-like"/>
</dbReference>
<dbReference type="InterPro" id="IPR000819">
    <property type="entry name" value="Peptidase_M17_C"/>
</dbReference>
<dbReference type="InterPro" id="IPR023042">
    <property type="entry name" value="Peptidase_M17_leu_NH2_pept"/>
</dbReference>
<dbReference type="InterPro" id="IPR008283">
    <property type="entry name" value="Peptidase_M17_N"/>
</dbReference>
<dbReference type="PANTHER" id="PTHR11963:SF23">
    <property type="entry name" value="CYTOSOL AMINOPEPTIDASE"/>
    <property type="match status" value="1"/>
</dbReference>
<dbReference type="PANTHER" id="PTHR11963">
    <property type="entry name" value="LEUCINE AMINOPEPTIDASE-RELATED"/>
    <property type="match status" value="1"/>
</dbReference>
<dbReference type="Pfam" id="PF00883">
    <property type="entry name" value="Peptidase_M17"/>
    <property type="match status" value="1"/>
</dbReference>
<dbReference type="Pfam" id="PF02789">
    <property type="entry name" value="Peptidase_M17_N"/>
    <property type="match status" value="1"/>
</dbReference>
<dbReference type="PRINTS" id="PR00481">
    <property type="entry name" value="LAMNOPPTDASE"/>
</dbReference>
<dbReference type="SUPFAM" id="SSF52949">
    <property type="entry name" value="Macro domain-like"/>
    <property type="match status" value="1"/>
</dbReference>
<dbReference type="SUPFAM" id="SSF53187">
    <property type="entry name" value="Zn-dependent exopeptidases"/>
    <property type="match status" value="1"/>
</dbReference>
<dbReference type="PROSITE" id="PS00631">
    <property type="entry name" value="CYTOSOL_AP"/>
    <property type="match status" value="1"/>
</dbReference>
<sequence>MVLYTRPPRLSVSRETFFGRQTPVVIPVFKEGDSIKLPEGLPQDLESLLKESYNSKAVSPEPGSVAKLPYRGGLVVTAGCGAPGDLEGVRRGFAAASRQVVDSFEEAQLYLVGLDTVSSTEAVIGALLGAYRLEEFKNTRKRKLQQLWVYGGEPRLDYAQAVAEGVYLARDIANAPPHRLPPAKLAAAVEDLFSKFDNVDVEVFSYDRLLEEGFGGIVSVGMGSEEKPRLIIIKYRGGAGEPIALVGKAVVFDSGGINLKPSQGMTLMRADKAGGAAVVGAMWTAARLGIKASIIGLIPAVINVPSGSSYLPSDVIRMWDGTMVEITNTDAEGRLILADAISYAAKQLGAKTVIDLATLTGAIVVALGPLIAGLFTRSDGLARAFEEASRTTGEKIWRMPMEDEYAKSLTQPAQAGEIVNAAQRYGGAIFGALFLERFVHGKEFAHLDIAGPGIAFEAGSLAPPYWPEKGMAPGYGVRLLIEVLSRMARGGG</sequence>
<keyword id="KW-0031">Aminopeptidase</keyword>
<keyword id="KW-0963">Cytoplasm</keyword>
<keyword id="KW-0378">Hydrolase</keyword>
<keyword id="KW-0464">Manganese</keyword>
<keyword id="KW-0479">Metal-binding</keyword>
<keyword id="KW-0645">Protease</keyword>
<keyword id="KW-1185">Reference proteome</keyword>
<feature type="chain" id="PRO_0000165822" description="Probable cytosol aminopeptidase">
    <location>
        <begin position="1"/>
        <end position="492"/>
    </location>
</feature>
<feature type="active site" evidence="2">
    <location>
        <position position="260"/>
    </location>
</feature>
<feature type="active site" evidence="2">
    <location>
        <position position="334"/>
    </location>
</feature>
<feature type="binding site" evidence="1">
    <location>
        <position position="248"/>
    </location>
    <ligand>
        <name>Mn(2+)</name>
        <dbReference type="ChEBI" id="CHEBI:29035"/>
        <label>2</label>
    </ligand>
</feature>
<feature type="binding site" evidence="1">
    <location>
        <position position="253"/>
    </location>
    <ligand>
        <name>Mn(2+)</name>
        <dbReference type="ChEBI" id="CHEBI:29035"/>
        <label>1</label>
    </ligand>
</feature>
<feature type="binding site" evidence="1">
    <location>
        <position position="253"/>
    </location>
    <ligand>
        <name>Mn(2+)</name>
        <dbReference type="ChEBI" id="CHEBI:29035"/>
        <label>2</label>
    </ligand>
</feature>
<feature type="binding site" evidence="1">
    <location>
        <position position="271"/>
    </location>
    <ligand>
        <name>Mn(2+)</name>
        <dbReference type="ChEBI" id="CHEBI:29035"/>
        <label>2</label>
    </ligand>
</feature>
<feature type="binding site" evidence="1">
    <location>
        <position position="330"/>
    </location>
    <ligand>
        <name>Mn(2+)</name>
        <dbReference type="ChEBI" id="CHEBI:29035"/>
        <label>1</label>
    </ligand>
</feature>
<feature type="binding site" evidence="1">
    <location>
        <position position="332"/>
    </location>
    <ligand>
        <name>Mn(2+)</name>
        <dbReference type="ChEBI" id="CHEBI:29035"/>
        <label>1</label>
    </ligand>
</feature>
<feature type="binding site" evidence="1">
    <location>
        <position position="332"/>
    </location>
    <ligand>
        <name>Mn(2+)</name>
        <dbReference type="ChEBI" id="CHEBI:29035"/>
        <label>2</label>
    </ligand>
</feature>
<name>AMPA_AERPE</name>
<accession>Q9Y935</accession>
<organism>
    <name type="scientific">Aeropyrum pernix (strain ATCC 700893 / DSM 11879 / JCM 9820 / NBRC 100138 / K1)</name>
    <dbReference type="NCBI Taxonomy" id="272557"/>
    <lineage>
        <taxon>Archaea</taxon>
        <taxon>Thermoproteota</taxon>
        <taxon>Thermoprotei</taxon>
        <taxon>Desulfurococcales</taxon>
        <taxon>Desulfurococcaceae</taxon>
        <taxon>Aeropyrum</taxon>
    </lineage>
</organism>
<protein>
    <recommendedName>
        <fullName>Probable cytosol aminopeptidase</fullName>
        <ecNumber>3.4.11.1</ecNumber>
    </recommendedName>
    <alternativeName>
        <fullName>Leucine aminopeptidase</fullName>
        <shortName>LAP</shortName>
        <ecNumber>3.4.11.10</ecNumber>
    </alternativeName>
    <alternativeName>
        <fullName>Leucyl aminopeptidase</fullName>
    </alternativeName>
</protein>
<proteinExistence type="inferred from homology"/>
<comment type="function">
    <text evidence="1">Presumably involved in the processing and regular turnover of intracellular proteins. Catalyzes the removal of unsubstituted N-terminal amino acids from various peptides (By similarity).</text>
</comment>
<comment type="catalytic activity">
    <reaction>
        <text>Release of an N-terminal amino acid, Xaa-|-Yaa-, in which Xaa is preferably Leu, but may be other amino acids including Pro although not Arg or Lys, and Yaa may be Pro. Amino acid amides and methyl esters are also readily hydrolyzed, but rates on arylamides are exceedingly low.</text>
        <dbReference type="EC" id="3.4.11.1"/>
    </reaction>
</comment>
<comment type="catalytic activity">
    <reaction>
        <text>Release of an N-terminal amino acid, preferentially leucine, but not glutamic or aspartic acids.</text>
        <dbReference type="EC" id="3.4.11.10"/>
    </reaction>
</comment>
<comment type="cofactor">
    <cofactor evidence="1">
        <name>Mn(2+)</name>
        <dbReference type="ChEBI" id="CHEBI:29035"/>
    </cofactor>
    <text evidence="1">Binds 2 manganese ions per subunit.</text>
</comment>
<comment type="subcellular location">
    <subcellularLocation>
        <location evidence="1">Cytoplasm</location>
    </subcellularLocation>
</comment>
<comment type="similarity">
    <text evidence="3">Belongs to the peptidase M17 family.</text>
</comment>